<feature type="signal peptide" evidence="2">
    <location>
        <begin position="1"/>
        <end position="27"/>
    </location>
</feature>
<feature type="propeptide" id="PRO_0000320090" evidence="2">
    <location>
        <begin position="28"/>
        <end position="47"/>
    </location>
</feature>
<feature type="chain" id="PRO_0000320091" description="Cadherin-7">
    <location>
        <begin position="48"/>
        <end position="785"/>
    </location>
</feature>
<feature type="topological domain" description="Extracellular" evidence="2">
    <location>
        <begin position="28"/>
        <end position="607"/>
    </location>
</feature>
<feature type="transmembrane region" description="Helical" evidence="2">
    <location>
        <begin position="608"/>
        <end position="628"/>
    </location>
</feature>
<feature type="topological domain" description="Cytoplasmic" evidence="2">
    <location>
        <begin position="629"/>
        <end position="785"/>
    </location>
</feature>
<feature type="domain" description="Cadherin 1" evidence="3">
    <location>
        <begin position="49"/>
        <end position="153"/>
    </location>
</feature>
<feature type="domain" description="Cadherin 2" evidence="3">
    <location>
        <begin position="154"/>
        <end position="262"/>
    </location>
</feature>
<feature type="domain" description="Cadherin 3" evidence="3">
    <location>
        <begin position="263"/>
        <end position="377"/>
    </location>
</feature>
<feature type="domain" description="Cadherin 4" evidence="3">
    <location>
        <begin position="378"/>
        <end position="482"/>
    </location>
</feature>
<feature type="domain" description="Cadherin 5" evidence="3">
    <location>
        <begin position="482"/>
        <end position="599"/>
    </location>
</feature>
<feature type="glycosylation site" description="N-linked (GlcNAc...) asparagine" evidence="2">
    <location>
        <position position="449"/>
    </location>
</feature>
<feature type="glycosylation site" description="N-linked (GlcNAc...) asparagine" evidence="2">
    <location>
        <position position="530"/>
    </location>
</feature>
<feature type="sequence conflict" description="In Ref. 1; AAP94032." evidence="4" ref="1">
    <original>L</original>
    <variation>V</variation>
    <location>
        <position position="307"/>
    </location>
</feature>
<feature type="sequence conflict" description="In Ref. 2; BAE23328." evidence="4" ref="2">
    <original>I</original>
    <variation>V</variation>
    <location>
        <position position="580"/>
    </location>
</feature>
<feature type="strand" evidence="5">
    <location>
        <begin position="53"/>
        <end position="57"/>
    </location>
</feature>
<feature type="strand" evidence="5">
    <location>
        <begin position="66"/>
        <end position="70"/>
    </location>
</feature>
<feature type="strand" evidence="5">
    <location>
        <begin position="78"/>
        <end position="80"/>
    </location>
</feature>
<feature type="strand" evidence="5">
    <location>
        <begin position="82"/>
        <end position="88"/>
    </location>
</feature>
<feature type="turn" evidence="5">
    <location>
        <begin position="92"/>
        <end position="94"/>
    </location>
</feature>
<feature type="strand" evidence="5">
    <location>
        <begin position="95"/>
        <end position="97"/>
    </location>
</feature>
<feature type="turn" evidence="5">
    <location>
        <begin position="99"/>
        <end position="101"/>
    </location>
</feature>
<feature type="strand" evidence="5">
    <location>
        <begin position="103"/>
        <end position="106"/>
    </location>
</feature>
<feature type="turn" evidence="5">
    <location>
        <begin position="112"/>
        <end position="114"/>
    </location>
</feature>
<feature type="strand" evidence="5">
    <location>
        <begin position="116"/>
        <end position="126"/>
    </location>
</feature>
<feature type="turn" evidence="5">
    <location>
        <begin position="127"/>
        <end position="129"/>
    </location>
</feature>
<feature type="strand" evidence="5">
    <location>
        <begin position="132"/>
        <end position="134"/>
    </location>
</feature>
<feature type="strand" evidence="5">
    <location>
        <begin position="137"/>
        <end position="144"/>
    </location>
</feature>
<feature type="strand" evidence="5">
    <location>
        <begin position="157"/>
        <end position="165"/>
    </location>
</feature>
<feature type="strand" evidence="5">
    <location>
        <begin position="171"/>
        <end position="174"/>
    </location>
</feature>
<feature type="strand" evidence="5">
    <location>
        <begin position="184"/>
        <end position="187"/>
    </location>
</feature>
<feature type="strand" evidence="5">
    <location>
        <begin position="192"/>
        <end position="197"/>
    </location>
</feature>
<feature type="turn" evidence="5">
    <location>
        <begin position="199"/>
        <end position="201"/>
    </location>
</feature>
<feature type="strand" evidence="5">
    <location>
        <begin position="202"/>
        <end position="204"/>
    </location>
</feature>
<feature type="turn" evidence="5">
    <location>
        <begin position="206"/>
        <end position="208"/>
    </location>
</feature>
<feature type="strand" evidence="5">
    <location>
        <begin position="210"/>
        <end position="213"/>
    </location>
</feature>
<feature type="strand" evidence="5">
    <location>
        <begin position="215"/>
        <end position="217"/>
    </location>
</feature>
<feature type="turn" evidence="5">
    <location>
        <begin position="220"/>
        <end position="222"/>
    </location>
</feature>
<feature type="strand" evidence="5">
    <location>
        <begin position="225"/>
        <end position="234"/>
    </location>
</feature>
<feature type="helix" evidence="5">
    <location>
        <begin position="235"/>
        <end position="237"/>
    </location>
</feature>
<feature type="strand" evidence="5">
    <location>
        <begin position="243"/>
        <end position="253"/>
    </location>
</feature>
<protein>
    <recommendedName>
        <fullName>Cadherin-7</fullName>
    </recommendedName>
</protein>
<evidence type="ECO:0000250" key="1"/>
<evidence type="ECO:0000255" key="2"/>
<evidence type="ECO:0000255" key="3">
    <source>
        <dbReference type="PROSITE-ProRule" id="PRU00043"/>
    </source>
</evidence>
<evidence type="ECO:0000305" key="4"/>
<evidence type="ECO:0007829" key="5">
    <source>
        <dbReference type="PDB" id="6CGS"/>
    </source>
</evidence>
<sequence length="785" mass="87202">MKLGKVELCHFLQLIALFLCFSGMSQAELPRSRSKPYFQSGRSRTKRSWVWNQFFVLEEYMGSDPLYVGKLHSDVDKGDGSIKYILSGEGASSIFIIDENTGDIHATKRLDREEQAYYTLRAQALDRLTNKPVEPESEFVIKIQDINDNEPKFLDGPYTAGVPEMSPVGTSVVQVTATDADDPTYGNSARVVYSILQGQPYFSVEPKTGVIKTALPNMDREAKDQYLLVIQAKDMVGQNGGLSGTTSVTVTLTDVNDNPPRFPRRSYQYNVPESLPVASVVARIKAADADIGVNAEMEYKIVDGDGLGIFKISADKDTQEGIITIQKELDFEAKTSYTLRIEAANRDADPRFLSLGPFSDTTTVKIIVEDVDEPPVFSSPLYPMEVSEATQVGHIIGTVAAHDPDSSNSPVRYSIDRNTDLERYFNIDANSGVITTAKSLDRETNAVHNITVLAMESQNPSQVGRGYVAITILDINDNAPEFAMDYETTVCENAQPGQVIQKISAVDKDEPSNGHQFYFSLTTDMTNNHNFSLKDNKDNTASILTRRNGFRRQEQSVYYLPIFIVDSGSPSLSSTNTLTIRVCDCDADGIAQTCNAEAYVLPAGLSTGALIAILACVLTLLVLILLIVTMRRRKKEPLIFDEERDIRENIVRYDDEGGGEEDTEAFDMAALRNLNAIRDSKTRRDVTPEIQFLSRPTFKNIPDNVIFREFIWERLKEADVDPGAPPYDSLQTYAFEGNGSVAESLSSLDSISSNSDQNYDYLSDWGPRFKRLAEMYGNGQESLYS</sequence>
<keyword id="KW-0002">3D-structure</keyword>
<keyword id="KW-0106">Calcium</keyword>
<keyword id="KW-0130">Cell adhesion</keyword>
<keyword id="KW-1003">Cell membrane</keyword>
<keyword id="KW-0165">Cleavage on pair of basic residues</keyword>
<keyword id="KW-0325">Glycoprotein</keyword>
<keyword id="KW-0472">Membrane</keyword>
<keyword id="KW-0479">Metal-binding</keyword>
<keyword id="KW-1185">Reference proteome</keyword>
<keyword id="KW-0677">Repeat</keyword>
<keyword id="KW-0732">Signal</keyword>
<keyword id="KW-0812">Transmembrane</keyword>
<keyword id="KW-1133">Transmembrane helix</keyword>
<gene>
    <name type="primary">Cdh7</name>
</gene>
<name>CADH7_MOUSE</name>
<proteinExistence type="evidence at protein level"/>
<organism>
    <name type="scientific">Mus musculus</name>
    <name type="common">Mouse</name>
    <dbReference type="NCBI Taxonomy" id="10090"/>
    <lineage>
        <taxon>Eukaryota</taxon>
        <taxon>Metazoa</taxon>
        <taxon>Chordata</taxon>
        <taxon>Craniata</taxon>
        <taxon>Vertebrata</taxon>
        <taxon>Euteleostomi</taxon>
        <taxon>Mammalia</taxon>
        <taxon>Eutheria</taxon>
        <taxon>Euarchontoglires</taxon>
        <taxon>Glires</taxon>
        <taxon>Rodentia</taxon>
        <taxon>Myomorpha</taxon>
        <taxon>Muroidea</taxon>
        <taxon>Muridae</taxon>
        <taxon>Murinae</taxon>
        <taxon>Mus</taxon>
        <taxon>Mus</taxon>
    </lineage>
</organism>
<dbReference type="EMBL" id="AY267034">
    <property type="protein sequence ID" value="AAP94032.1"/>
    <property type="molecule type" value="mRNA"/>
</dbReference>
<dbReference type="EMBL" id="AK034096">
    <property type="protein sequence ID" value="BAC28586.1"/>
    <property type="molecule type" value="mRNA"/>
</dbReference>
<dbReference type="EMBL" id="AK137369">
    <property type="protein sequence ID" value="BAE23328.1"/>
    <property type="molecule type" value="mRNA"/>
</dbReference>
<dbReference type="CCDS" id="CCDS15221.1"/>
<dbReference type="RefSeq" id="NP_001303672.1">
    <property type="nucleotide sequence ID" value="NM_001316743.1"/>
</dbReference>
<dbReference type="RefSeq" id="NP_766441.1">
    <property type="nucleotide sequence ID" value="NM_172853.3"/>
</dbReference>
<dbReference type="RefSeq" id="XP_006529663.1">
    <property type="nucleotide sequence ID" value="XM_006529600.3"/>
</dbReference>
<dbReference type="RefSeq" id="XP_006529664.1">
    <property type="nucleotide sequence ID" value="XM_006529601.3"/>
</dbReference>
<dbReference type="RefSeq" id="XP_006529671.1">
    <property type="nucleotide sequence ID" value="XM_006529608.3"/>
</dbReference>
<dbReference type="RefSeq" id="XP_006529672.1">
    <property type="nucleotide sequence ID" value="XM_006529609.3"/>
</dbReference>
<dbReference type="RefSeq" id="XP_006529673.1">
    <property type="nucleotide sequence ID" value="XM_006529610.4"/>
</dbReference>
<dbReference type="RefSeq" id="XP_006529674.1">
    <property type="nucleotide sequence ID" value="XM_006529611.4"/>
</dbReference>
<dbReference type="RefSeq" id="XP_011246308.1">
    <property type="nucleotide sequence ID" value="XM_011248006.2"/>
</dbReference>
<dbReference type="RefSeq" id="XP_017176182.1">
    <property type="nucleotide sequence ID" value="XM_017320693.2"/>
</dbReference>
<dbReference type="RefSeq" id="XP_017176187.1">
    <property type="nucleotide sequence ID" value="XM_017320698.1"/>
</dbReference>
<dbReference type="RefSeq" id="XP_017176188.1">
    <property type="nucleotide sequence ID" value="XM_017320699.1"/>
</dbReference>
<dbReference type="RefSeq" id="XP_017176190.1">
    <property type="nucleotide sequence ID" value="XM_017320701.1"/>
</dbReference>
<dbReference type="RefSeq" id="XP_017176192.1">
    <property type="nucleotide sequence ID" value="XM_017320703.2"/>
</dbReference>
<dbReference type="RefSeq" id="XP_036020984.1">
    <property type="nucleotide sequence ID" value="XM_036165091.1"/>
</dbReference>
<dbReference type="PDB" id="6CGS">
    <property type="method" value="X-ray"/>
    <property type="resolution" value="1.72 A"/>
    <property type="chains" value="A/B=48-254"/>
</dbReference>
<dbReference type="PDBsum" id="6CGS"/>
<dbReference type="SMR" id="Q8BM92"/>
<dbReference type="FunCoup" id="Q8BM92">
    <property type="interactions" value="38"/>
</dbReference>
<dbReference type="STRING" id="10090.ENSMUSP00000108321"/>
<dbReference type="GlyCosmos" id="Q8BM92">
    <property type="glycosylation" value="2 sites, No reported glycans"/>
</dbReference>
<dbReference type="GlyGen" id="Q8BM92">
    <property type="glycosylation" value="2 sites, 2 N-linked glycans (2 sites)"/>
</dbReference>
<dbReference type="iPTMnet" id="Q8BM92"/>
<dbReference type="PhosphoSitePlus" id="Q8BM92"/>
<dbReference type="PaxDb" id="10090-ENSMUSP00000108321"/>
<dbReference type="ProteomicsDB" id="273580"/>
<dbReference type="Antibodypedia" id="2257">
    <property type="antibodies" value="183 antibodies from 29 providers"/>
</dbReference>
<dbReference type="DNASU" id="241201"/>
<dbReference type="Ensembl" id="ENSMUST00000027542.13">
    <property type="protein sequence ID" value="ENSMUSP00000027542.7"/>
    <property type="gene ID" value="ENSMUSG00000026312.18"/>
</dbReference>
<dbReference type="Ensembl" id="ENSMUST00000112701.8">
    <property type="protein sequence ID" value="ENSMUSP00000108321.2"/>
    <property type="gene ID" value="ENSMUSG00000026312.18"/>
</dbReference>
<dbReference type="Ensembl" id="ENSMUST00000172005.8">
    <property type="protein sequence ID" value="ENSMUSP00000129715.2"/>
    <property type="gene ID" value="ENSMUSG00000026312.18"/>
</dbReference>
<dbReference type="GeneID" id="241201"/>
<dbReference type="KEGG" id="mmu:241201"/>
<dbReference type="UCSC" id="uc007chw.1">
    <property type="organism name" value="mouse"/>
</dbReference>
<dbReference type="AGR" id="MGI:2442792"/>
<dbReference type="CTD" id="1005"/>
<dbReference type="MGI" id="MGI:2442792">
    <property type="gene designation" value="Cdh7"/>
</dbReference>
<dbReference type="VEuPathDB" id="HostDB:ENSMUSG00000026312"/>
<dbReference type="eggNOG" id="KOG3594">
    <property type="taxonomic scope" value="Eukaryota"/>
</dbReference>
<dbReference type="GeneTree" id="ENSGT00940000157031"/>
<dbReference type="HOGENOM" id="CLU_005284_3_1_1"/>
<dbReference type="InParanoid" id="Q8BM92"/>
<dbReference type="OMA" id="YETMVCE"/>
<dbReference type="OrthoDB" id="6250271at2759"/>
<dbReference type="PhylomeDB" id="Q8BM92"/>
<dbReference type="TreeFam" id="TF329887"/>
<dbReference type="Reactome" id="R-MMU-418990">
    <property type="pathway name" value="Adherens junctions interactions"/>
</dbReference>
<dbReference type="BioGRID-ORCS" id="241201">
    <property type="hits" value="1 hit in 77 CRISPR screens"/>
</dbReference>
<dbReference type="ChiTaRS" id="Cdh7">
    <property type="organism name" value="mouse"/>
</dbReference>
<dbReference type="PRO" id="PR:Q8BM92"/>
<dbReference type="Proteomes" id="UP000000589">
    <property type="component" value="Chromosome 1"/>
</dbReference>
<dbReference type="RNAct" id="Q8BM92">
    <property type="molecule type" value="protein"/>
</dbReference>
<dbReference type="Bgee" id="ENSMUSG00000026312">
    <property type="expression patterns" value="Expressed in lumbar subsegment of spinal cord and 83 other cell types or tissues"/>
</dbReference>
<dbReference type="ExpressionAtlas" id="Q8BM92">
    <property type="expression patterns" value="baseline and differential"/>
</dbReference>
<dbReference type="GO" id="GO:0005886">
    <property type="term" value="C:plasma membrane"/>
    <property type="evidence" value="ECO:0007669"/>
    <property type="project" value="UniProtKB-SubCell"/>
</dbReference>
<dbReference type="GO" id="GO:0005509">
    <property type="term" value="F:calcium ion binding"/>
    <property type="evidence" value="ECO:0007669"/>
    <property type="project" value="InterPro"/>
</dbReference>
<dbReference type="GO" id="GO:0007156">
    <property type="term" value="P:homophilic cell adhesion via plasma membrane adhesion molecules"/>
    <property type="evidence" value="ECO:0007669"/>
    <property type="project" value="InterPro"/>
</dbReference>
<dbReference type="CDD" id="cd11304">
    <property type="entry name" value="Cadherin_repeat"/>
    <property type="match status" value="5"/>
</dbReference>
<dbReference type="FunFam" id="4.10.900.10:FF:000001">
    <property type="entry name" value="Cadherin 2"/>
    <property type="match status" value="1"/>
</dbReference>
<dbReference type="FunFam" id="2.60.40.60:FF:000008">
    <property type="entry name" value="Cadherin 24"/>
    <property type="match status" value="1"/>
</dbReference>
<dbReference type="FunFam" id="2.60.40.60:FF:000009">
    <property type="entry name" value="Cadherin 24"/>
    <property type="match status" value="1"/>
</dbReference>
<dbReference type="FunFam" id="2.60.40.60:FF:000012">
    <property type="entry name" value="Cadherin 24"/>
    <property type="match status" value="1"/>
</dbReference>
<dbReference type="FunFam" id="2.60.40.60:FF:000017">
    <property type="entry name" value="Cadherin 24"/>
    <property type="match status" value="1"/>
</dbReference>
<dbReference type="FunFam" id="2.60.40.60:FF:000014">
    <property type="entry name" value="Cadherin 8"/>
    <property type="match status" value="1"/>
</dbReference>
<dbReference type="Gene3D" id="2.60.40.60">
    <property type="entry name" value="Cadherins"/>
    <property type="match status" value="5"/>
</dbReference>
<dbReference type="Gene3D" id="4.10.900.10">
    <property type="entry name" value="TCF3-CBD (Catenin binding domain)"/>
    <property type="match status" value="1"/>
</dbReference>
<dbReference type="InterPro" id="IPR039808">
    <property type="entry name" value="Cadherin"/>
</dbReference>
<dbReference type="InterPro" id="IPR002126">
    <property type="entry name" value="Cadherin-like_dom"/>
</dbReference>
<dbReference type="InterPro" id="IPR015919">
    <property type="entry name" value="Cadherin-like_sf"/>
</dbReference>
<dbReference type="InterPro" id="IPR020894">
    <property type="entry name" value="Cadherin_CS"/>
</dbReference>
<dbReference type="InterPro" id="IPR000233">
    <property type="entry name" value="Cadherin_Y-type_LIR"/>
</dbReference>
<dbReference type="InterPro" id="IPR027397">
    <property type="entry name" value="Catenin-bd_sf"/>
</dbReference>
<dbReference type="PANTHER" id="PTHR24027">
    <property type="entry name" value="CADHERIN-23"/>
    <property type="match status" value="1"/>
</dbReference>
<dbReference type="PANTHER" id="PTHR24027:SF91">
    <property type="entry name" value="CADHERIN-7"/>
    <property type="match status" value="1"/>
</dbReference>
<dbReference type="Pfam" id="PF01049">
    <property type="entry name" value="CADH_Y-type_LIR"/>
    <property type="match status" value="1"/>
</dbReference>
<dbReference type="Pfam" id="PF00028">
    <property type="entry name" value="Cadherin"/>
    <property type="match status" value="5"/>
</dbReference>
<dbReference type="PRINTS" id="PR00205">
    <property type="entry name" value="CADHERIN"/>
</dbReference>
<dbReference type="SMART" id="SM00112">
    <property type="entry name" value="CA"/>
    <property type="match status" value="5"/>
</dbReference>
<dbReference type="SUPFAM" id="SSF49313">
    <property type="entry name" value="Cadherin-like"/>
    <property type="match status" value="5"/>
</dbReference>
<dbReference type="PROSITE" id="PS00232">
    <property type="entry name" value="CADHERIN_1"/>
    <property type="match status" value="3"/>
</dbReference>
<dbReference type="PROSITE" id="PS50268">
    <property type="entry name" value="CADHERIN_2"/>
    <property type="match status" value="5"/>
</dbReference>
<reference key="1">
    <citation type="journal article" date="2004" name="Oncogene">
        <title>Involvement of cadherins 7 and 20 in mouse embryogenesis and melanocyte transformation.</title>
        <authorList>
            <person name="Moore R."/>
            <person name="Champeval D."/>
            <person name="Denat L."/>
            <person name="Tan S.S."/>
            <person name="Faure F."/>
            <person name="Julien-Grille S."/>
            <person name="Larue L."/>
        </authorList>
    </citation>
    <scope>NUCLEOTIDE SEQUENCE [MRNA]</scope>
    <source>
        <strain>BALB/cJ</strain>
        <tissue>Brain</tissue>
    </source>
</reference>
<reference key="2">
    <citation type="journal article" date="2005" name="Science">
        <title>The transcriptional landscape of the mammalian genome.</title>
        <authorList>
            <person name="Carninci P."/>
            <person name="Kasukawa T."/>
            <person name="Katayama S."/>
            <person name="Gough J."/>
            <person name="Frith M.C."/>
            <person name="Maeda N."/>
            <person name="Oyama R."/>
            <person name="Ravasi T."/>
            <person name="Lenhard B."/>
            <person name="Wells C."/>
            <person name="Kodzius R."/>
            <person name="Shimokawa K."/>
            <person name="Bajic V.B."/>
            <person name="Brenner S.E."/>
            <person name="Batalov S."/>
            <person name="Forrest A.R."/>
            <person name="Zavolan M."/>
            <person name="Davis M.J."/>
            <person name="Wilming L.G."/>
            <person name="Aidinis V."/>
            <person name="Allen J.E."/>
            <person name="Ambesi-Impiombato A."/>
            <person name="Apweiler R."/>
            <person name="Aturaliya R.N."/>
            <person name="Bailey T.L."/>
            <person name="Bansal M."/>
            <person name="Baxter L."/>
            <person name="Beisel K.W."/>
            <person name="Bersano T."/>
            <person name="Bono H."/>
            <person name="Chalk A.M."/>
            <person name="Chiu K.P."/>
            <person name="Choudhary V."/>
            <person name="Christoffels A."/>
            <person name="Clutterbuck D.R."/>
            <person name="Crowe M.L."/>
            <person name="Dalla E."/>
            <person name="Dalrymple B.P."/>
            <person name="de Bono B."/>
            <person name="Della Gatta G."/>
            <person name="di Bernardo D."/>
            <person name="Down T."/>
            <person name="Engstrom P."/>
            <person name="Fagiolini M."/>
            <person name="Faulkner G."/>
            <person name="Fletcher C.F."/>
            <person name="Fukushima T."/>
            <person name="Furuno M."/>
            <person name="Futaki S."/>
            <person name="Gariboldi M."/>
            <person name="Georgii-Hemming P."/>
            <person name="Gingeras T.R."/>
            <person name="Gojobori T."/>
            <person name="Green R.E."/>
            <person name="Gustincich S."/>
            <person name="Harbers M."/>
            <person name="Hayashi Y."/>
            <person name="Hensch T.K."/>
            <person name="Hirokawa N."/>
            <person name="Hill D."/>
            <person name="Huminiecki L."/>
            <person name="Iacono M."/>
            <person name="Ikeo K."/>
            <person name="Iwama A."/>
            <person name="Ishikawa T."/>
            <person name="Jakt M."/>
            <person name="Kanapin A."/>
            <person name="Katoh M."/>
            <person name="Kawasawa Y."/>
            <person name="Kelso J."/>
            <person name="Kitamura H."/>
            <person name="Kitano H."/>
            <person name="Kollias G."/>
            <person name="Krishnan S.P."/>
            <person name="Kruger A."/>
            <person name="Kummerfeld S.K."/>
            <person name="Kurochkin I.V."/>
            <person name="Lareau L.F."/>
            <person name="Lazarevic D."/>
            <person name="Lipovich L."/>
            <person name="Liu J."/>
            <person name="Liuni S."/>
            <person name="McWilliam S."/>
            <person name="Madan Babu M."/>
            <person name="Madera M."/>
            <person name="Marchionni L."/>
            <person name="Matsuda H."/>
            <person name="Matsuzawa S."/>
            <person name="Miki H."/>
            <person name="Mignone F."/>
            <person name="Miyake S."/>
            <person name="Morris K."/>
            <person name="Mottagui-Tabar S."/>
            <person name="Mulder N."/>
            <person name="Nakano N."/>
            <person name="Nakauchi H."/>
            <person name="Ng P."/>
            <person name="Nilsson R."/>
            <person name="Nishiguchi S."/>
            <person name="Nishikawa S."/>
            <person name="Nori F."/>
            <person name="Ohara O."/>
            <person name="Okazaki Y."/>
            <person name="Orlando V."/>
            <person name="Pang K.C."/>
            <person name="Pavan W.J."/>
            <person name="Pavesi G."/>
            <person name="Pesole G."/>
            <person name="Petrovsky N."/>
            <person name="Piazza S."/>
            <person name="Reed J."/>
            <person name="Reid J.F."/>
            <person name="Ring B.Z."/>
            <person name="Ringwald M."/>
            <person name="Rost B."/>
            <person name="Ruan Y."/>
            <person name="Salzberg S.L."/>
            <person name="Sandelin A."/>
            <person name="Schneider C."/>
            <person name="Schoenbach C."/>
            <person name="Sekiguchi K."/>
            <person name="Semple C.A."/>
            <person name="Seno S."/>
            <person name="Sessa L."/>
            <person name="Sheng Y."/>
            <person name="Shibata Y."/>
            <person name="Shimada H."/>
            <person name="Shimada K."/>
            <person name="Silva D."/>
            <person name="Sinclair B."/>
            <person name="Sperling S."/>
            <person name="Stupka E."/>
            <person name="Sugiura K."/>
            <person name="Sultana R."/>
            <person name="Takenaka Y."/>
            <person name="Taki K."/>
            <person name="Tammoja K."/>
            <person name="Tan S.L."/>
            <person name="Tang S."/>
            <person name="Taylor M.S."/>
            <person name="Tegner J."/>
            <person name="Teichmann S.A."/>
            <person name="Ueda H.R."/>
            <person name="van Nimwegen E."/>
            <person name="Verardo R."/>
            <person name="Wei C.L."/>
            <person name="Yagi K."/>
            <person name="Yamanishi H."/>
            <person name="Zabarovsky E."/>
            <person name="Zhu S."/>
            <person name="Zimmer A."/>
            <person name="Hide W."/>
            <person name="Bult C."/>
            <person name="Grimmond S.M."/>
            <person name="Teasdale R.D."/>
            <person name="Liu E.T."/>
            <person name="Brusic V."/>
            <person name="Quackenbush J."/>
            <person name="Wahlestedt C."/>
            <person name="Mattick J.S."/>
            <person name="Hume D.A."/>
            <person name="Kai C."/>
            <person name="Sasaki D."/>
            <person name="Tomaru Y."/>
            <person name="Fukuda S."/>
            <person name="Kanamori-Katayama M."/>
            <person name="Suzuki M."/>
            <person name="Aoki J."/>
            <person name="Arakawa T."/>
            <person name="Iida J."/>
            <person name="Imamura K."/>
            <person name="Itoh M."/>
            <person name="Kato T."/>
            <person name="Kawaji H."/>
            <person name="Kawagashira N."/>
            <person name="Kawashima T."/>
            <person name="Kojima M."/>
            <person name="Kondo S."/>
            <person name="Konno H."/>
            <person name="Nakano K."/>
            <person name="Ninomiya N."/>
            <person name="Nishio T."/>
            <person name="Okada M."/>
            <person name="Plessy C."/>
            <person name="Shibata K."/>
            <person name="Shiraki T."/>
            <person name="Suzuki S."/>
            <person name="Tagami M."/>
            <person name="Waki K."/>
            <person name="Watahiki A."/>
            <person name="Okamura-Oho Y."/>
            <person name="Suzuki H."/>
            <person name="Kawai J."/>
            <person name="Hayashizaki Y."/>
        </authorList>
    </citation>
    <scope>NUCLEOTIDE SEQUENCE [LARGE SCALE MRNA]</scope>
    <source>
        <strain>C57BL/6J</strain>
        <tissue>Cerebellum</tissue>
        <tissue>Diencephalon</tissue>
    </source>
</reference>
<comment type="function">
    <text evidence="1">Cadherins are calcium-dependent cell adhesion proteins. They preferentially interact with themselves in a homophilic manner in connecting cells; cadherins may thus contribute to the sorting of heterogeneous cell types (By similarity).</text>
</comment>
<comment type="subcellular location">
    <subcellularLocation>
        <location evidence="1">Cell membrane</location>
        <topology evidence="1">Single-pass type I membrane protein</topology>
    </subcellularLocation>
</comment>
<comment type="domain">
    <text evidence="1">Three calcium ions are usually bound at the interface of each cadherin domain and rigidify the connections, imparting a strong curvature to the full-length ectodomain.</text>
</comment>
<accession>Q8BM92</accession>
<accession>Q3UVE2</accession>
<accession>Q67G09</accession>